<reference key="1">
    <citation type="journal article" date="2007" name="BMC Mol. Biol.">
        <title>The venom gland transcriptome of the Desert Massasauga rattlesnake (Sistrurus catenatus edwardsii): towards an understanding of venom composition among advanced snakes (Superfamily Colubroidea).</title>
        <authorList>
            <person name="Pahari S."/>
            <person name="Mackessy S.P."/>
            <person name="Kini R.M."/>
        </authorList>
    </citation>
    <scope>NUCLEOTIDE SEQUENCE [MRNA]</scope>
    <source>
        <tissue>Venom gland</tissue>
    </source>
</reference>
<name>CRVP_SISCA</name>
<accession>B0VXV6</accession>
<comment type="function">
    <text evidence="1">Weakly blocks contraction of smooth muscle elicited by high potassium-induced depolarization, but does not block caffeine-stimulated contraction. May target voltage-gated calcium channels on smooth muscle (By similarity).</text>
</comment>
<comment type="subcellular location">
    <subcellularLocation>
        <location evidence="1">Secreted</location>
    </subcellularLocation>
</comment>
<comment type="tissue specificity">
    <text>Expressed by the venom gland.</text>
</comment>
<comment type="similarity">
    <text evidence="3">Belongs to the CRISP family.</text>
</comment>
<keyword id="KW-0108">Calcium channel impairing toxin</keyword>
<keyword id="KW-1015">Disulfide bond</keyword>
<keyword id="KW-0872">Ion channel impairing toxin</keyword>
<keyword id="KW-0528">Neurotoxin</keyword>
<keyword id="KW-0964">Secreted</keyword>
<keyword id="KW-0732">Signal</keyword>
<keyword id="KW-0800">Toxin</keyword>
<organism>
    <name type="scientific">Sistrurus catenatus edwardsii</name>
    <name type="common">Desert massasauga</name>
    <name type="synonym">Crotalophorus edwardsii</name>
    <dbReference type="NCBI Taxonomy" id="8762"/>
    <lineage>
        <taxon>Eukaryota</taxon>
        <taxon>Metazoa</taxon>
        <taxon>Chordata</taxon>
        <taxon>Craniata</taxon>
        <taxon>Vertebrata</taxon>
        <taxon>Euteleostomi</taxon>
        <taxon>Lepidosauria</taxon>
        <taxon>Squamata</taxon>
        <taxon>Bifurcata</taxon>
        <taxon>Unidentata</taxon>
        <taxon>Episquamata</taxon>
        <taxon>Toxicofera</taxon>
        <taxon>Serpentes</taxon>
        <taxon>Colubroidea</taxon>
        <taxon>Viperidae</taxon>
        <taxon>Crotalinae</taxon>
        <taxon>Sistrurus</taxon>
    </lineage>
</organism>
<dbReference type="EMBL" id="DQ464263">
    <property type="protein sequence ID" value="ABG26992.1"/>
    <property type="molecule type" value="mRNA"/>
</dbReference>
<dbReference type="SMR" id="B0VXV6"/>
<dbReference type="GO" id="GO:0005576">
    <property type="term" value="C:extracellular region"/>
    <property type="evidence" value="ECO:0007669"/>
    <property type="project" value="UniProtKB-SubCell"/>
</dbReference>
<dbReference type="GO" id="GO:0005246">
    <property type="term" value="F:calcium channel regulator activity"/>
    <property type="evidence" value="ECO:0007669"/>
    <property type="project" value="UniProtKB-KW"/>
</dbReference>
<dbReference type="GO" id="GO:0090729">
    <property type="term" value="F:toxin activity"/>
    <property type="evidence" value="ECO:0007669"/>
    <property type="project" value="UniProtKB-KW"/>
</dbReference>
<dbReference type="CDD" id="cd05383">
    <property type="entry name" value="CAP_CRISP"/>
    <property type="match status" value="1"/>
</dbReference>
<dbReference type="FunFam" id="3.40.33.10:FF:000005">
    <property type="entry name" value="Cysteine-rich secretory protein 2"/>
    <property type="match status" value="1"/>
</dbReference>
<dbReference type="Gene3D" id="3.40.33.10">
    <property type="entry name" value="CAP"/>
    <property type="match status" value="1"/>
</dbReference>
<dbReference type="Gene3D" id="1.10.10.740">
    <property type="entry name" value="Crisp domain"/>
    <property type="match status" value="1"/>
</dbReference>
<dbReference type="InterPro" id="IPR018244">
    <property type="entry name" value="Allrgn_V5/Tpx1_CS"/>
</dbReference>
<dbReference type="InterPro" id="IPR014044">
    <property type="entry name" value="CAP_dom"/>
</dbReference>
<dbReference type="InterPro" id="IPR035940">
    <property type="entry name" value="CAP_sf"/>
</dbReference>
<dbReference type="InterPro" id="IPR042076">
    <property type="entry name" value="Crisp-like_dom"/>
</dbReference>
<dbReference type="InterPro" id="IPR001283">
    <property type="entry name" value="CRISP-related"/>
</dbReference>
<dbReference type="InterPro" id="IPR013871">
    <property type="entry name" value="Cysteine_rich_secretory"/>
</dbReference>
<dbReference type="InterPro" id="IPR034117">
    <property type="entry name" value="SCP_CRISP"/>
</dbReference>
<dbReference type="InterPro" id="IPR003582">
    <property type="entry name" value="ShKT_dom"/>
</dbReference>
<dbReference type="InterPro" id="IPR002413">
    <property type="entry name" value="V5_allergen-like"/>
</dbReference>
<dbReference type="PANTHER" id="PTHR10334">
    <property type="entry name" value="CYSTEINE-RICH SECRETORY PROTEIN-RELATED"/>
    <property type="match status" value="1"/>
</dbReference>
<dbReference type="Pfam" id="PF00188">
    <property type="entry name" value="CAP"/>
    <property type="match status" value="1"/>
</dbReference>
<dbReference type="Pfam" id="PF08562">
    <property type="entry name" value="Crisp"/>
    <property type="match status" value="1"/>
</dbReference>
<dbReference type="PRINTS" id="PR00838">
    <property type="entry name" value="V5ALLERGEN"/>
</dbReference>
<dbReference type="PRINTS" id="PR00837">
    <property type="entry name" value="V5TPXLIKE"/>
</dbReference>
<dbReference type="SMART" id="SM00198">
    <property type="entry name" value="SCP"/>
    <property type="match status" value="1"/>
</dbReference>
<dbReference type="SUPFAM" id="SSF57546">
    <property type="entry name" value="Crisp domain-like"/>
    <property type="match status" value="1"/>
</dbReference>
<dbReference type="SUPFAM" id="SSF55797">
    <property type="entry name" value="PR-1-like"/>
    <property type="match status" value="1"/>
</dbReference>
<dbReference type="PROSITE" id="PS01009">
    <property type="entry name" value="CRISP_1"/>
    <property type="match status" value="1"/>
</dbReference>
<dbReference type="PROSITE" id="PS01010">
    <property type="entry name" value="CRISP_2"/>
    <property type="match status" value="1"/>
</dbReference>
<dbReference type="PROSITE" id="PS51670">
    <property type="entry name" value="SHKT"/>
    <property type="match status" value="1"/>
</dbReference>
<sequence length="239" mass="26542">MIALIVLPILAAVLQQSSGSVDFDSESPRKPEIQNKIVDLHNSLRRSVNPTASNMLKMEWYSEAAANAERWAYRCIESHSPRDSRVLEGIKCGENIYMSSVPMKWTEIIHIWHGENKNFKYGIGADPPNAVTGHYTQIVWYKSYRAGCAAAYCPSLEYSYFYVCQYCPAGNIRGKTATPYKSGPPCGDCPSACDNGLCTNPCPKKISTQLPRFGPQAGCQDKQMQSDCSATCFCQNKII</sequence>
<feature type="signal peptide" evidence="1">
    <location>
        <begin position="1"/>
        <end position="19"/>
    </location>
</feature>
<feature type="chain" id="PRO_0000380663" description="Cysteine-rich venom protein 2">
    <location>
        <begin position="20"/>
        <end position="239"/>
    </location>
</feature>
<feature type="domain" description="SCP">
    <location>
        <begin position="38"/>
        <end position="166"/>
    </location>
</feature>
<feature type="domain" description="ShKT" evidence="2">
    <location>
        <begin position="198"/>
        <end position="234"/>
    </location>
</feature>
<feature type="disulfide bond" evidence="2">
    <location>
        <begin position="75"/>
        <end position="153"/>
    </location>
</feature>
<feature type="disulfide bond" evidence="2">
    <location>
        <begin position="92"/>
        <end position="167"/>
    </location>
</feature>
<feature type="disulfide bond" evidence="2">
    <location>
        <begin position="148"/>
        <end position="164"/>
    </location>
</feature>
<feature type="disulfide bond" evidence="2">
    <location>
        <begin position="186"/>
        <end position="193"/>
    </location>
</feature>
<feature type="disulfide bond" evidence="2">
    <location>
        <begin position="189"/>
        <end position="198"/>
    </location>
</feature>
<feature type="disulfide bond" evidence="2">
    <location>
        <begin position="202"/>
        <end position="234"/>
    </location>
</feature>
<feature type="disulfide bond" evidence="2">
    <location>
        <begin position="219"/>
        <end position="232"/>
    </location>
</feature>
<proteinExistence type="evidence at transcript level"/>
<evidence type="ECO:0000250" key="1"/>
<evidence type="ECO:0000255" key="2">
    <source>
        <dbReference type="PROSITE-ProRule" id="PRU01005"/>
    </source>
</evidence>
<evidence type="ECO:0000305" key="3"/>
<protein>
    <recommendedName>
        <fullName>Cysteine-rich venom protein 2</fullName>
        <shortName>CRVP</shortName>
    </recommendedName>
    <alternativeName>
        <fullName>Cysteine-rich secretory protein 2</fullName>
        <shortName>CRISP-2</shortName>
    </alternativeName>
</protein>